<organism>
    <name type="scientific">Bacillus subtilis (strain 168)</name>
    <dbReference type="NCBI Taxonomy" id="224308"/>
    <lineage>
        <taxon>Bacteria</taxon>
        <taxon>Bacillati</taxon>
        <taxon>Bacillota</taxon>
        <taxon>Bacilli</taxon>
        <taxon>Bacillales</taxon>
        <taxon>Bacillaceae</taxon>
        <taxon>Bacillus</taxon>
    </lineage>
</organism>
<feature type="chain" id="PRO_0000149722" description="HTH-type transcriptional regulator AnsR">
    <location>
        <begin position="1"/>
        <end position="116"/>
    </location>
</feature>
<feature type="domain" description="HTH cro/C1-type" evidence="1">
    <location>
        <begin position="6"/>
        <end position="60"/>
    </location>
</feature>
<feature type="DNA-binding region" description="H-T-H motif" evidence="1">
    <location>
        <begin position="17"/>
        <end position="36"/>
    </location>
</feature>
<name>ANSR_BACSU</name>
<keyword id="KW-0238">DNA-binding</keyword>
<keyword id="KW-1185">Reference proteome</keyword>
<keyword id="KW-0678">Repressor</keyword>
<keyword id="KW-0804">Transcription</keyword>
<keyword id="KW-0805">Transcription regulation</keyword>
<evidence type="ECO:0000255" key="1">
    <source>
        <dbReference type="PROSITE-ProRule" id="PRU00257"/>
    </source>
</evidence>
<dbReference type="EMBL" id="L08205">
    <property type="protein sequence ID" value="AAA72333.1"/>
    <property type="molecule type" value="Genomic_DNA"/>
</dbReference>
<dbReference type="EMBL" id="D84432">
    <property type="protein sequence ID" value="BAA12641.1"/>
    <property type="molecule type" value="Genomic_DNA"/>
</dbReference>
<dbReference type="EMBL" id="AL009126">
    <property type="protein sequence ID" value="CAB14291.1"/>
    <property type="molecule type" value="Genomic_DNA"/>
</dbReference>
<dbReference type="PIR" id="B40617">
    <property type="entry name" value="B40617"/>
</dbReference>
<dbReference type="RefSeq" id="NP_390240.1">
    <property type="nucleotide sequence ID" value="NC_000964.3"/>
</dbReference>
<dbReference type="RefSeq" id="WP_004399024.1">
    <property type="nucleotide sequence ID" value="NZ_OZ025638.1"/>
</dbReference>
<dbReference type="SMR" id="Q07683"/>
<dbReference type="FunCoup" id="Q07683">
    <property type="interactions" value="5"/>
</dbReference>
<dbReference type="IntAct" id="Q07683">
    <property type="interactions" value="2"/>
</dbReference>
<dbReference type="STRING" id="224308.BSU23590"/>
<dbReference type="PaxDb" id="224308-BSU23590"/>
<dbReference type="EnsemblBacteria" id="CAB14291">
    <property type="protein sequence ID" value="CAB14291"/>
    <property type="gene ID" value="BSU_23590"/>
</dbReference>
<dbReference type="GeneID" id="938717"/>
<dbReference type="KEGG" id="bsu:BSU23590"/>
<dbReference type="PATRIC" id="fig|224308.179.peg.2571"/>
<dbReference type="eggNOG" id="COG1396">
    <property type="taxonomic scope" value="Bacteria"/>
</dbReference>
<dbReference type="InParanoid" id="Q07683"/>
<dbReference type="OrthoDB" id="8115576at2"/>
<dbReference type="PhylomeDB" id="Q07683"/>
<dbReference type="BioCyc" id="BSUB:BSU23590-MONOMER"/>
<dbReference type="Proteomes" id="UP000001570">
    <property type="component" value="Chromosome"/>
</dbReference>
<dbReference type="GO" id="GO:0003677">
    <property type="term" value="F:DNA binding"/>
    <property type="evidence" value="ECO:0007669"/>
    <property type="project" value="UniProtKB-KW"/>
</dbReference>
<dbReference type="CDD" id="cd00093">
    <property type="entry name" value="HTH_XRE"/>
    <property type="match status" value="1"/>
</dbReference>
<dbReference type="Gene3D" id="1.10.260.40">
    <property type="entry name" value="lambda repressor-like DNA-binding domains"/>
    <property type="match status" value="1"/>
</dbReference>
<dbReference type="InterPro" id="IPR001387">
    <property type="entry name" value="Cro/C1-type_HTH"/>
</dbReference>
<dbReference type="InterPro" id="IPR010982">
    <property type="entry name" value="Lambda_DNA-bd_dom_sf"/>
</dbReference>
<dbReference type="PANTHER" id="PTHR46558:SF14">
    <property type="entry name" value="HTH-TYPE TRANSCRIPTIONAL REGULATOR ANSR"/>
    <property type="match status" value="1"/>
</dbReference>
<dbReference type="PANTHER" id="PTHR46558">
    <property type="entry name" value="TRACRIPTIONAL REGULATORY PROTEIN-RELATED-RELATED"/>
    <property type="match status" value="1"/>
</dbReference>
<dbReference type="Pfam" id="PF01381">
    <property type="entry name" value="HTH_3"/>
    <property type="match status" value="1"/>
</dbReference>
<dbReference type="SMART" id="SM00530">
    <property type="entry name" value="HTH_XRE"/>
    <property type="match status" value="1"/>
</dbReference>
<dbReference type="SUPFAM" id="SSF47413">
    <property type="entry name" value="lambda repressor-like DNA-binding domains"/>
    <property type="match status" value="1"/>
</dbReference>
<dbReference type="PROSITE" id="PS50943">
    <property type="entry name" value="HTH_CROC1"/>
    <property type="match status" value="1"/>
</dbReference>
<protein>
    <recommendedName>
        <fullName>HTH-type transcriptional regulator AnsR</fullName>
    </recommendedName>
    <alternativeName>
        <fullName>Ans operon repressor protein</fullName>
    </alternativeName>
</protein>
<accession>Q07683</accession>
<comment type="function">
    <text>Transcriptional repressor for the ans operon coding for L-asparaginase and L-aspartase. NH4(+) may influence this repression.</text>
</comment>
<gene>
    <name type="primary">ansR</name>
    <name type="ordered locus">BSU23590</name>
</gene>
<reference key="1">
    <citation type="journal article" date="1993" name="J. Bacteriol.">
        <title>Cloning and nucleotide sequence of the Bacillus subtilis ansR gene, which encodes a repressor of the ans operon coding for L-asparaginase and L-aspartase.</title>
        <authorList>
            <person name="Sun D."/>
            <person name="Setlow P."/>
        </authorList>
    </citation>
    <scope>NUCLEOTIDE SEQUENCE [GENOMIC DNA]</scope>
</reference>
<reference key="2">
    <citation type="journal article" date="1996" name="Microbiology">
        <title>Systematic sequencing of the 283 kb 210 degrees-232 degrees region of the Bacillus subtilis genome containing the skin element and many sporulation genes.</title>
        <authorList>
            <person name="Mizuno M."/>
            <person name="Masuda S."/>
            <person name="Takemaru K."/>
            <person name="Hosono S."/>
            <person name="Sato T."/>
            <person name="Takeuchi M."/>
            <person name="Kobayashi Y."/>
        </authorList>
    </citation>
    <scope>NUCLEOTIDE SEQUENCE [GENOMIC DNA]</scope>
    <source>
        <strain>168 / JH642</strain>
    </source>
</reference>
<reference key="3">
    <citation type="journal article" date="1997" name="Nature">
        <title>The complete genome sequence of the Gram-positive bacterium Bacillus subtilis.</title>
        <authorList>
            <person name="Kunst F."/>
            <person name="Ogasawara N."/>
            <person name="Moszer I."/>
            <person name="Albertini A.M."/>
            <person name="Alloni G."/>
            <person name="Azevedo V."/>
            <person name="Bertero M.G."/>
            <person name="Bessieres P."/>
            <person name="Bolotin A."/>
            <person name="Borchert S."/>
            <person name="Borriss R."/>
            <person name="Boursier L."/>
            <person name="Brans A."/>
            <person name="Braun M."/>
            <person name="Brignell S.C."/>
            <person name="Bron S."/>
            <person name="Brouillet S."/>
            <person name="Bruschi C.V."/>
            <person name="Caldwell B."/>
            <person name="Capuano V."/>
            <person name="Carter N.M."/>
            <person name="Choi S.-K."/>
            <person name="Codani J.-J."/>
            <person name="Connerton I.F."/>
            <person name="Cummings N.J."/>
            <person name="Daniel R.A."/>
            <person name="Denizot F."/>
            <person name="Devine K.M."/>
            <person name="Duesterhoeft A."/>
            <person name="Ehrlich S.D."/>
            <person name="Emmerson P.T."/>
            <person name="Entian K.-D."/>
            <person name="Errington J."/>
            <person name="Fabret C."/>
            <person name="Ferrari E."/>
            <person name="Foulger D."/>
            <person name="Fritz C."/>
            <person name="Fujita M."/>
            <person name="Fujita Y."/>
            <person name="Fuma S."/>
            <person name="Galizzi A."/>
            <person name="Galleron N."/>
            <person name="Ghim S.-Y."/>
            <person name="Glaser P."/>
            <person name="Goffeau A."/>
            <person name="Golightly E.J."/>
            <person name="Grandi G."/>
            <person name="Guiseppi G."/>
            <person name="Guy B.J."/>
            <person name="Haga K."/>
            <person name="Haiech J."/>
            <person name="Harwood C.R."/>
            <person name="Henaut A."/>
            <person name="Hilbert H."/>
            <person name="Holsappel S."/>
            <person name="Hosono S."/>
            <person name="Hullo M.-F."/>
            <person name="Itaya M."/>
            <person name="Jones L.-M."/>
            <person name="Joris B."/>
            <person name="Karamata D."/>
            <person name="Kasahara Y."/>
            <person name="Klaerr-Blanchard M."/>
            <person name="Klein C."/>
            <person name="Kobayashi Y."/>
            <person name="Koetter P."/>
            <person name="Koningstein G."/>
            <person name="Krogh S."/>
            <person name="Kumano M."/>
            <person name="Kurita K."/>
            <person name="Lapidus A."/>
            <person name="Lardinois S."/>
            <person name="Lauber J."/>
            <person name="Lazarevic V."/>
            <person name="Lee S.-M."/>
            <person name="Levine A."/>
            <person name="Liu H."/>
            <person name="Masuda S."/>
            <person name="Mauel C."/>
            <person name="Medigue C."/>
            <person name="Medina N."/>
            <person name="Mellado R.P."/>
            <person name="Mizuno M."/>
            <person name="Moestl D."/>
            <person name="Nakai S."/>
            <person name="Noback M."/>
            <person name="Noone D."/>
            <person name="O'Reilly M."/>
            <person name="Ogawa K."/>
            <person name="Ogiwara A."/>
            <person name="Oudega B."/>
            <person name="Park S.-H."/>
            <person name="Parro V."/>
            <person name="Pohl T.M."/>
            <person name="Portetelle D."/>
            <person name="Porwollik S."/>
            <person name="Prescott A.M."/>
            <person name="Presecan E."/>
            <person name="Pujic P."/>
            <person name="Purnelle B."/>
            <person name="Rapoport G."/>
            <person name="Rey M."/>
            <person name="Reynolds S."/>
            <person name="Rieger M."/>
            <person name="Rivolta C."/>
            <person name="Rocha E."/>
            <person name="Roche B."/>
            <person name="Rose M."/>
            <person name="Sadaie Y."/>
            <person name="Sato T."/>
            <person name="Scanlan E."/>
            <person name="Schleich S."/>
            <person name="Schroeter R."/>
            <person name="Scoffone F."/>
            <person name="Sekiguchi J."/>
            <person name="Sekowska A."/>
            <person name="Seror S.J."/>
            <person name="Serror P."/>
            <person name="Shin B.-S."/>
            <person name="Soldo B."/>
            <person name="Sorokin A."/>
            <person name="Tacconi E."/>
            <person name="Takagi T."/>
            <person name="Takahashi H."/>
            <person name="Takemaru K."/>
            <person name="Takeuchi M."/>
            <person name="Tamakoshi A."/>
            <person name="Tanaka T."/>
            <person name="Terpstra P."/>
            <person name="Tognoni A."/>
            <person name="Tosato V."/>
            <person name="Uchiyama S."/>
            <person name="Vandenbol M."/>
            <person name="Vannier F."/>
            <person name="Vassarotti A."/>
            <person name="Viari A."/>
            <person name="Wambutt R."/>
            <person name="Wedler E."/>
            <person name="Wedler H."/>
            <person name="Weitzenegger T."/>
            <person name="Winters P."/>
            <person name="Wipat A."/>
            <person name="Yamamoto H."/>
            <person name="Yamane K."/>
            <person name="Yasumoto K."/>
            <person name="Yata K."/>
            <person name="Yoshida K."/>
            <person name="Yoshikawa H.-F."/>
            <person name="Zumstein E."/>
            <person name="Yoshikawa H."/>
            <person name="Danchin A."/>
        </authorList>
    </citation>
    <scope>NUCLEOTIDE SEQUENCE [LARGE SCALE GENOMIC DNA]</scope>
    <source>
        <strain>168</strain>
    </source>
</reference>
<proteinExistence type="predicted"/>
<sequence length="116" mass="13231">MNLDRLTELRKKKNWSLQYTADLLGIAKSTYAGYESGYRRPSLEALAMLADLFDTTCDELLGREKQKQTAPQAIELATWSSLDFTISVDGQPLSEDEIIQLITFIRTKRKVQEELS</sequence>